<protein>
    <recommendedName>
        <fullName evidence="1">tRNA uridine(34) hydroxylase</fullName>
        <ecNumber evidence="1">1.14.-.-</ecNumber>
    </recommendedName>
    <alternativeName>
        <fullName evidence="1">tRNA hydroxylation protein O</fullName>
    </alternativeName>
</protein>
<evidence type="ECO:0000255" key="1">
    <source>
        <dbReference type="HAMAP-Rule" id="MF_00469"/>
    </source>
</evidence>
<reference key="1">
    <citation type="submission" date="2008-01" db="EMBL/GenBank/DDBJ databases">
        <title>Complete sequence of Pseudomonas putida GB-1.</title>
        <authorList>
            <consortium name="US DOE Joint Genome Institute"/>
            <person name="Copeland A."/>
            <person name="Lucas S."/>
            <person name="Lapidus A."/>
            <person name="Barry K."/>
            <person name="Glavina del Rio T."/>
            <person name="Dalin E."/>
            <person name="Tice H."/>
            <person name="Pitluck S."/>
            <person name="Bruce D."/>
            <person name="Goodwin L."/>
            <person name="Chertkov O."/>
            <person name="Brettin T."/>
            <person name="Detter J.C."/>
            <person name="Han C."/>
            <person name="Kuske C.R."/>
            <person name="Schmutz J."/>
            <person name="Larimer F."/>
            <person name="Land M."/>
            <person name="Hauser L."/>
            <person name="Kyrpides N."/>
            <person name="Kim E."/>
            <person name="McCarthy J.K."/>
            <person name="Richardson P."/>
        </authorList>
    </citation>
    <scope>NUCLEOTIDE SEQUENCE [LARGE SCALE GENOMIC DNA]</scope>
    <source>
        <strain>GB-1</strain>
    </source>
</reference>
<accession>B0KTW7</accession>
<comment type="function">
    <text evidence="1">Catalyzes oxygen-dependent 5-hydroxyuridine (ho5U) modification at position 34 in tRNAs.</text>
</comment>
<comment type="catalytic activity">
    <reaction evidence="1">
        <text>uridine(34) in tRNA + AH2 + O2 = 5-hydroxyuridine(34) in tRNA + A + H2O</text>
        <dbReference type="Rhea" id="RHEA:64224"/>
        <dbReference type="Rhea" id="RHEA-COMP:11727"/>
        <dbReference type="Rhea" id="RHEA-COMP:13381"/>
        <dbReference type="ChEBI" id="CHEBI:13193"/>
        <dbReference type="ChEBI" id="CHEBI:15377"/>
        <dbReference type="ChEBI" id="CHEBI:15379"/>
        <dbReference type="ChEBI" id="CHEBI:17499"/>
        <dbReference type="ChEBI" id="CHEBI:65315"/>
        <dbReference type="ChEBI" id="CHEBI:136877"/>
    </reaction>
</comment>
<comment type="similarity">
    <text evidence="1">Belongs to the TrhO family.</text>
</comment>
<feature type="chain" id="PRO_1000081192" description="tRNA uridine(34) hydroxylase">
    <location>
        <begin position="1"/>
        <end position="310"/>
    </location>
</feature>
<feature type="domain" description="Rhodanese" evidence="1">
    <location>
        <begin position="124"/>
        <end position="218"/>
    </location>
</feature>
<feature type="active site" description="Cysteine persulfide intermediate" evidence="1">
    <location>
        <position position="178"/>
    </location>
</feature>
<organism>
    <name type="scientific">Pseudomonas putida (strain GB-1)</name>
    <dbReference type="NCBI Taxonomy" id="76869"/>
    <lineage>
        <taxon>Bacteria</taxon>
        <taxon>Pseudomonadati</taxon>
        <taxon>Pseudomonadota</taxon>
        <taxon>Gammaproteobacteria</taxon>
        <taxon>Pseudomonadales</taxon>
        <taxon>Pseudomonadaceae</taxon>
        <taxon>Pseudomonas</taxon>
    </lineage>
</organism>
<keyword id="KW-0560">Oxidoreductase</keyword>
<keyword id="KW-0819">tRNA processing</keyword>
<gene>
    <name evidence="1" type="primary">trhO</name>
    <name type="ordered locus">PputGB1_1349</name>
</gene>
<sequence length="310" mass="35118">MSQAIVVAALYKFVTLEDYIELREPLLQAMLDNNVKGTLLLAHEGINGTVSATREGIDGLLAWLRNDPRLVDVDHKESYCDEQPFYRTKVKLKKEIVTLGVPGVDPNQAVGTYVEPKDWNALISDPEVLLIDTRNDYEVAIGTFKGAIDPKTETFREFPEYIKANFDPSKHKKVAMFCTGGIRCEKASSYMLGEGFDAVYHLKGGILKYFEEVPQEESLWDGDCFVFDNRVTVRHDLSEGEYDQCHACRHPINAQERASEHYSPGVSCPHCWDTLSEKTRRSAIDRQKQIELAKARNLPHPIGYNYKAEA</sequence>
<dbReference type="EC" id="1.14.-.-" evidence="1"/>
<dbReference type="EMBL" id="CP000926">
    <property type="protein sequence ID" value="ABY97256.1"/>
    <property type="molecule type" value="Genomic_DNA"/>
</dbReference>
<dbReference type="RefSeq" id="WP_012271027.1">
    <property type="nucleotide sequence ID" value="NC_010322.1"/>
</dbReference>
<dbReference type="SMR" id="B0KTW7"/>
<dbReference type="KEGG" id="ppg:PputGB1_1349"/>
<dbReference type="eggNOG" id="COG1054">
    <property type="taxonomic scope" value="Bacteria"/>
</dbReference>
<dbReference type="HOGENOM" id="CLU_038878_0_0_6"/>
<dbReference type="Proteomes" id="UP000002157">
    <property type="component" value="Chromosome"/>
</dbReference>
<dbReference type="GO" id="GO:0016705">
    <property type="term" value="F:oxidoreductase activity, acting on paired donors, with incorporation or reduction of molecular oxygen"/>
    <property type="evidence" value="ECO:0007669"/>
    <property type="project" value="UniProtKB-UniRule"/>
</dbReference>
<dbReference type="GO" id="GO:0006400">
    <property type="term" value="P:tRNA modification"/>
    <property type="evidence" value="ECO:0007669"/>
    <property type="project" value="UniProtKB-UniRule"/>
</dbReference>
<dbReference type="CDD" id="cd01518">
    <property type="entry name" value="RHOD_YceA"/>
    <property type="match status" value="1"/>
</dbReference>
<dbReference type="Gene3D" id="3.30.70.100">
    <property type="match status" value="1"/>
</dbReference>
<dbReference type="Gene3D" id="3.40.250.10">
    <property type="entry name" value="Rhodanese-like domain"/>
    <property type="match status" value="1"/>
</dbReference>
<dbReference type="HAMAP" id="MF_00469">
    <property type="entry name" value="TrhO"/>
    <property type="match status" value="1"/>
</dbReference>
<dbReference type="InterPro" id="IPR001763">
    <property type="entry name" value="Rhodanese-like_dom"/>
</dbReference>
<dbReference type="InterPro" id="IPR036873">
    <property type="entry name" value="Rhodanese-like_dom_sf"/>
</dbReference>
<dbReference type="InterPro" id="IPR020936">
    <property type="entry name" value="TrhO"/>
</dbReference>
<dbReference type="InterPro" id="IPR040503">
    <property type="entry name" value="TRHO_N"/>
</dbReference>
<dbReference type="NCBIfam" id="NF001136">
    <property type="entry name" value="PRK00142.1-4"/>
    <property type="match status" value="1"/>
</dbReference>
<dbReference type="PANTHER" id="PTHR43268:SF3">
    <property type="entry name" value="RHODANESE-LIKE DOMAIN-CONTAINING PROTEIN 7-RELATED"/>
    <property type="match status" value="1"/>
</dbReference>
<dbReference type="PANTHER" id="PTHR43268">
    <property type="entry name" value="THIOSULFATE SULFURTRANSFERASE/RHODANESE-LIKE DOMAIN-CONTAINING PROTEIN 2"/>
    <property type="match status" value="1"/>
</dbReference>
<dbReference type="Pfam" id="PF00581">
    <property type="entry name" value="Rhodanese"/>
    <property type="match status" value="1"/>
</dbReference>
<dbReference type="Pfam" id="PF17773">
    <property type="entry name" value="UPF0176_N"/>
    <property type="match status" value="1"/>
</dbReference>
<dbReference type="SMART" id="SM00450">
    <property type="entry name" value="RHOD"/>
    <property type="match status" value="1"/>
</dbReference>
<dbReference type="SUPFAM" id="SSF52821">
    <property type="entry name" value="Rhodanese/Cell cycle control phosphatase"/>
    <property type="match status" value="1"/>
</dbReference>
<dbReference type="PROSITE" id="PS50206">
    <property type="entry name" value="RHODANESE_3"/>
    <property type="match status" value="1"/>
</dbReference>
<proteinExistence type="inferred from homology"/>
<name>TRHO_PSEPG</name>